<organism>
    <name type="scientific">Staphylococcus aureus (strain Mu50 / ATCC 700699)</name>
    <dbReference type="NCBI Taxonomy" id="158878"/>
    <lineage>
        <taxon>Bacteria</taxon>
        <taxon>Bacillati</taxon>
        <taxon>Bacillota</taxon>
        <taxon>Bacilli</taxon>
        <taxon>Bacillales</taxon>
        <taxon>Staphylococcaceae</taxon>
        <taxon>Staphylococcus</taxon>
    </lineage>
</organism>
<keyword id="KW-0002">3D-structure</keyword>
<keyword id="KW-0031">Aminopeptidase</keyword>
<keyword id="KW-0378">Hydrolase</keyword>
<keyword id="KW-0479">Metal-binding</keyword>
<keyword id="KW-0645">Protease</keyword>
<protein>
    <recommendedName>
        <fullName evidence="1">Methionine aminopeptidase</fullName>
        <shortName evidence="1">MAP</shortName>
        <shortName evidence="1">MetAP</shortName>
        <ecNumber evidence="1">3.4.11.18</ecNumber>
    </recommendedName>
    <alternativeName>
        <fullName evidence="1">Peptidase M</fullName>
    </alternativeName>
</protein>
<accession>P0A078</accession>
<accession>Q9KWL1</accession>
<proteinExistence type="evidence at protein level"/>
<evidence type="ECO:0000255" key="1">
    <source>
        <dbReference type="HAMAP-Rule" id="MF_01974"/>
    </source>
</evidence>
<evidence type="ECO:0000269" key="2">
    <source>
    </source>
</evidence>
<evidence type="ECO:0007829" key="3">
    <source>
        <dbReference type="PDB" id="1QXY"/>
    </source>
</evidence>
<dbReference type="EC" id="3.4.11.18" evidence="1"/>
<dbReference type="EMBL" id="BA000017">
    <property type="protein sequence ID" value="BAB58050.1"/>
    <property type="molecule type" value="Genomic_DNA"/>
</dbReference>
<dbReference type="RefSeq" id="WP_000636142.1">
    <property type="nucleotide sequence ID" value="NC_002758.2"/>
</dbReference>
<dbReference type="PDB" id="1QXW">
    <property type="method" value="X-ray"/>
    <property type="resolution" value="1.67 A"/>
    <property type="chains" value="A=1-252"/>
</dbReference>
<dbReference type="PDB" id="1QXY">
    <property type="method" value="X-ray"/>
    <property type="resolution" value="1.04 A"/>
    <property type="chains" value="A=1-252"/>
</dbReference>
<dbReference type="PDB" id="1QXZ">
    <property type="method" value="X-ray"/>
    <property type="resolution" value="1.68 A"/>
    <property type="chains" value="A=1-252"/>
</dbReference>
<dbReference type="PDBsum" id="1QXW"/>
<dbReference type="PDBsum" id="1QXY"/>
<dbReference type="PDBsum" id="1QXZ"/>
<dbReference type="SMR" id="P0A078"/>
<dbReference type="DrugBank" id="DB08160">
    <property type="generic name" value="(2S)-2-AMINO-4-(METHYLSULFANYL)-1-(1,3-THIAZOL-2-YL)BUTANE-1,1-DIOL"/>
</dbReference>
<dbReference type="DrugBank" id="DB01882">
    <property type="generic name" value="(2s)-2-Amino-4-(Methylsulfanyl)-1-Pyridin-2-Ylbutane-1,1-Diol"/>
</dbReference>
<dbReference type="DrugBank" id="DB02408">
    <property type="generic name" value="(3s)-3-Amino-1-(Cyclopropylamino)Heptane-2,2-Diol"/>
</dbReference>
<dbReference type="MEROPS" id="M24.036"/>
<dbReference type="KEGG" id="sav:SAV1888"/>
<dbReference type="HOGENOM" id="CLU_015857_0_2_9"/>
<dbReference type="PhylomeDB" id="P0A078"/>
<dbReference type="EvolutionaryTrace" id="P0A078"/>
<dbReference type="PRO" id="PR:P0A078"/>
<dbReference type="Proteomes" id="UP000002481">
    <property type="component" value="Chromosome"/>
</dbReference>
<dbReference type="GO" id="GO:0004239">
    <property type="term" value="F:initiator methionyl aminopeptidase activity"/>
    <property type="evidence" value="ECO:0007669"/>
    <property type="project" value="UniProtKB-UniRule"/>
</dbReference>
<dbReference type="GO" id="GO:0046872">
    <property type="term" value="F:metal ion binding"/>
    <property type="evidence" value="ECO:0007669"/>
    <property type="project" value="UniProtKB-UniRule"/>
</dbReference>
<dbReference type="GO" id="GO:0070006">
    <property type="term" value="F:metalloaminopeptidase activity"/>
    <property type="evidence" value="ECO:0007669"/>
    <property type="project" value="UniProtKB-UniRule"/>
</dbReference>
<dbReference type="GO" id="GO:0006508">
    <property type="term" value="P:proteolysis"/>
    <property type="evidence" value="ECO:0007669"/>
    <property type="project" value="UniProtKB-KW"/>
</dbReference>
<dbReference type="CDD" id="cd01086">
    <property type="entry name" value="MetAP1"/>
    <property type="match status" value="1"/>
</dbReference>
<dbReference type="Gene3D" id="3.90.230.10">
    <property type="entry name" value="Creatinase/methionine aminopeptidase superfamily"/>
    <property type="match status" value="1"/>
</dbReference>
<dbReference type="HAMAP" id="MF_01974">
    <property type="entry name" value="MetAP_1"/>
    <property type="match status" value="1"/>
</dbReference>
<dbReference type="InterPro" id="IPR036005">
    <property type="entry name" value="Creatinase/aminopeptidase-like"/>
</dbReference>
<dbReference type="InterPro" id="IPR000994">
    <property type="entry name" value="Pept_M24"/>
</dbReference>
<dbReference type="InterPro" id="IPR001714">
    <property type="entry name" value="Pept_M24_MAP"/>
</dbReference>
<dbReference type="InterPro" id="IPR002467">
    <property type="entry name" value="Pept_M24A_MAP1"/>
</dbReference>
<dbReference type="NCBIfam" id="TIGR00500">
    <property type="entry name" value="met_pdase_I"/>
    <property type="match status" value="1"/>
</dbReference>
<dbReference type="PANTHER" id="PTHR43330">
    <property type="entry name" value="METHIONINE AMINOPEPTIDASE"/>
    <property type="match status" value="1"/>
</dbReference>
<dbReference type="PANTHER" id="PTHR43330:SF13">
    <property type="entry name" value="METHIONINE AMINOPEPTIDASE 2"/>
    <property type="match status" value="1"/>
</dbReference>
<dbReference type="Pfam" id="PF00557">
    <property type="entry name" value="Peptidase_M24"/>
    <property type="match status" value="1"/>
</dbReference>
<dbReference type="PRINTS" id="PR00599">
    <property type="entry name" value="MAPEPTIDASE"/>
</dbReference>
<dbReference type="SUPFAM" id="SSF55920">
    <property type="entry name" value="Creatinase/aminopeptidase"/>
    <property type="match status" value="1"/>
</dbReference>
<comment type="function">
    <text evidence="1">Removes the N-terminal methionine from nascent proteins. The N-terminal methionine is often cleaved when the second residue in the primary sequence is small and uncharged (Met-Ala-, Cys, Gly, Pro, Ser, Thr, or Val). Requires deformylation of the N(alpha)-formylated initiator methionine before it can be hydrolyzed.</text>
</comment>
<comment type="catalytic activity">
    <reaction evidence="1">
        <text>Release of N-terminal amino acids, preferentially methionine, from peptides and arylamides.</text>
        <dbReference type="EC" id="3.4.11.18"/>
    </reaction>
</comment>
<comment type="cofactor">
    <cofactor evidence="1 2">
        <name>Co(2+)</name>
        <dbReference type="ChEBI" id="CHEBI:48828"/>
    </cofactor>
    <cofactor evidence="1">
        <name>Zn(2+)</name>
        <dbReference type="ChEBI" id="CHEBI:29105"/>
    </cofactor>
    <cofactor evidence="1">
        <name>Mn(2+)</name>
        <dbReference type="ChEBI" id="CHEBI:29035"/>
    </cofactor>
    <cofactor evidence="1">
        <name>Fe(2+)</name>
        <dbReference type="ChEBI" id="CHEBI:29033"/>
    </cofactor>
    <text evidence="1 2">Binds 2 divalent metal cations per subunit. Has a high-affinity and a low affinity metal-binding site. The true nature of the physiological cofactor is under debate. The enzyme is active with cobalt, zinc, manganese or divalent iron ions. Most likely, methionine aminopeptidases function as mononuclear Fe(2+)-metalloproteases under physiological conditions, and the catalytically relevant metal-binding site has been assigned to the histidine-containing high-affinity site.</text>
</comment>
<comment type="subunit">
    <text evidence="1">Monomer.</text>
</comment>
<comment type="similarity">
    <text evidence="1">Belongs to the peptidase M24A family. Methionine aminopeptidase type 1 subfamily.</text>
</comment>
<sequence>MIVKTEEELQALKEIGYICAKVRNTMQAATKPGITTKELDNIAKELFEEYGAISAPIHDENFPGQTCISVNEEVAHGIPSKRVIREGDLVNIDVSALKNGYYADTGISFVVGESDDPMKQKVCDVATMAFENAIAKVKPGTKLSNIGKAVHNTARQNDLKVIKNLTGHGVGLSLHEAPAHVLNYFDPKDKTLLTEGMVLAIEPFISSNASFVTEGKNEWAFETSDKSFVAQIEHTVIVTKDGPILTTKIEEE</sequence>
<gene>
    <name evidence="1" type="primary">map</name>
    <name type="ordered locus">SAV1888</name>
</gene>
<feature type="chain" id="PRO_0000148955" description="Methionine aminopeptidase">
    <location>
        <begin position="1"/>
        <end position="252"/>
    </location>
</feature>
<feature type="binding site" evidence="1 2">
    <location>
        <position position="76"/>
    </location>
    <ligand>
        <name>substrate</name>
    </ligand>
</feature>
<feature type="binding site" evidence="1 2">
    <location>
        <position position="93"/>
    </location>
    <ligand>
        <name>a divalent metal cation</name>
        <dbReference type="ChEBI" id="CHEBI:60240"/>
        <label>1</label>
    </ligand>
</feature>
<feature type="binding site" evidence="1 2">
    <location>
        <position position="104"/>
    </location>
    <ligand>
        <name>a divalent metal cation</name>
        <dbReference type="ChEBI" id="CHEBI:60240"/>
        <label>1</label>
    </ligand>
</feature>
<feature type="binding site" evidence="1 2">
    <location>
        <position position="104"/>
    </location>
    <ligand>
        <name>a divalent metal cation</name>
        <dbReference type="ChEBI" id="CHEBI:60240"/>
        <label>2</label>
        <note>catalytic</note>
    </ligand>
</feature>
<feature type="binding site" evidence="1 2">
    <location>
        <position position="168"/>
    </location>
    <ligand>
        <name>a divalent metal cation</name>
        <dbReference type="ChEBI" id="CHEBI:60240"/>
        <label>2</label>
        <note>catalytic</note>
    </ligand>
</feature>
<feature type="binding site" evidence="1 2">
    <location>
        <position position="175"/>
    </location>
    <ligand>
        <name>substrate</name>
    </ligand>
</feature>
<feature type="binding site" evidence="1 2">
    <location>
        <position position="202"/>
    </location>
    <ligand>
        <name>a divalent metal cation</name>
        <dbReference type="ChEBI" id="CHEBI:60240"/>
        <label>2</label>
        <note>catalytic</note>
    </ligand>
</feature>
<feature type="binding site" evidence="1 2">
    <location>
        <position position="233"/>
    </location>
    <ligand>
        <name>a divalent metal cation</name>
        <dbReference type="ChEBI" id="CHEBI:60240"/>
        <label>1</label>
    </ligand>
</feature>
<feature type="binding site" evidence="1 2">
    <location>
        <position position="233"/>
    </location>
    <ligand>
        <name>a divalent metal cation</name>
        <dbReference type="ChEBI" id="CHEBI:60240"/>
        <label>2</label>
        <note>catalytic</note>
    </ligand>
</feature>
<feature type="helix" evidence="3">
    <location>
        <begin position="6"/>
        <end position="29"/>
    </location>
</feature>
<feature type="helix" evidence="3">
    <location>
        <begin position="36"/>
        <end position="50"/>
    </location>
</feature>
<feature type="helix" evidence="3">
    <location>
        <begin position="55"/>
        <end position="60"/>
    </location>
</feature>
<feature type="strand" evidence="3">
    <location>
        <begin position="63"/>
        <end position="70"/>
    </location>
</feature>
<feature type="strand" evidence="3">
    <location>
        <begin position="73"/>
        <end position="75"/>
    </location>
</feature>
<feature type="strand" evidence="3">
    <location>
        <begin position="89"/>
        <end position="98"/>
    </location>
</feature>
<feature type="strand" evidence="3">
    <location>
        <begin position="101"/>
        <end position="110"/>
    </location>
</feature>
<feature type="helix" evidence="3">
    <location>
        <begin position="118"/>
        <end position="134"/>
    </location>
</feature>
<feature type="helix" evidence="3">
    <location>
        <begin position="144"/>
        <end position="156"/>
    </location>
</feature>
<feature type="strand" evidence="3">
    <location>
        <begin position="167"/>
        <end position="169"/>
    </location>
</feature>
<feature type="strand" evidence="3">
    <location>
        <begin position="171"/>
        <end position="181"/>
    </location>
</feature>
<feature type="strand" evidence="3">
    <location>
        <begin position="197"/>
        <end position="201"/>
    </location>
</feature>
<feature type="strand" evidence="3">
    <location>
        <begin position="204"/>
        <end position="208"/>
    </location>
</feature>
<feature type="strand" evidence="3">
    <location>
        <begin position="216"/>
        <end position="219"/>
    </location>
</feature>
<feature type="strand" evidence="3">
    <location>
        <begin position="229"/>
        <end position="237"/>
    </location>
</feature>
<reference key="1">
    <citation type="journal article" date="2001" name="Lancet">
        <title>Whole genome sequencing of meticillin-resistant Staphylococcus aureus.</title>
        <authorList>
            <person name="Kuroda M."/>
            <person name="Ohta T."/>
            <person name="Uchiyama I."/>
            <person name="Baba T."/>
            <person name="Yuzawa H."/>
            <person name="Kobayashi I."/>
            <person name="Cui L."/>
            <person name="Oguchi A."/>
            <person name="Aoki K."/>
            <person name="Nagai Y."/>
            <person name="Lian J.-Q."/>
            <person name="Ito T."/>
            <person name="Kanamori M."/>
            <person name="Matsumaru H."/>
            <person name="Maruyama A."/>
            <person name="Murakami H."/>
            <person name="Hosoyama A."/>
            <person name="Mizutani-Ui Y."/>
            <person name="Takahashi N.K."/>
            <person name="Sawano T."/>
            <person name="Inoue R."/>
            <person name="Kaito C."/>
            <person name="Sekimizu K."/>
            <person name="Hirakawa H."/>
            <person name="Kuhara S."/>
            <person name="Goto S."/>
            <person name="Yabuzaki J."/>
            <person name="Kanehisa M."/>
            <person name="Yamashita A."/>
            <person name="Oshima K."/>
            <person name="Furuya K."/>
            <person name="Yoshino C."/>
            <person name="Shiba T."/>
            <person name="Hattori M."/>
            <person name="Ogasawara N."/>
            <person name="Hayashi H."/>
            <person name="Hiramatsu K."/>
        </authorList>
    </citation>
    <scope>NUCLEOTIDE SEQUENCE [LARGE SCALE GENOMIC DNA]</scope>
    <source>
        <strain>Mu50 / ATCC 700699</strain>
    </source>
</reference>
<reference key="2">
    <citation type="journal article" date="2004" name="J. Med. Chem.">
        <title>Crystal structures of Staphylococcus aureus methionine aminopeptidase complexed with keto heterocycle and aminoketone inhibitors reveal the formation of a tetrahedral intermediate.</title>
        <authorList>
            <person name="Douangamath A."/>
            <person name="Dale G.E."/>
            <person name="D'Arcy A."/>
            <person name="Almstetter M."/>
            <person name="Eckl R."/>
            <person name="Frutos-Hoener A."/>
            <person name="Henkel B."/>
            <person name="Illgen K."/>
            <person name="Nerdinger S."/>
            <person name="Schulz H."/>
            <person name="Mac Sweeney A."/>
            <person name="Thormann M."/>
            <person name="Treml A."/>
            <person name="Pierau S."/>
            <person name="Wadman S."/>
            <person name="Oefner C."/>
        </authorList>
    </citation>
    <scope>X-RAY CRYSTALLOGRAPHY (1.04 ANGSTROMS) IN COMPLEXES WITH COBALT IONS AND INHIBITOR</scope>
</reference>
<name>MAP1_STAAM</name>